<accession>Q8PZ21</accession>
<protein>
    <recommendedName>
        <fullName evidence="1">Prefoldin subunit beta</fullName>
    </recommendedName>
    <alternativeName>
        <fullName evidence="1">GimC subunit beta</fullName>
    </alternativeName>
</protein>
<reference key="1">
    <citation type="journal article" date="2002" name="J. Mol. Microbiol. Biotechnol.">
        <title>The genome of Methanosarcina mazei: evidence for lateral gene transfer between Bacteria and Archaea.</title>
        <authorList>
            <person name="Deppenmeier U."/>
            <person name="Johann A."/>
            <person name="Hartsch T."/>
            <person name="Merkl R."/>
            <person name="Schmitz R.A."/>
            <person name="Martinez-Arias R."/>
            <person name="Henne A."/>
            <person name="Wiezer A."/>
            <person name="Baeumer S."/>
            <person name="Jacobi C."/>
            <person name="Brueggemann H."/>
            <person name="Lienard T."/>
            <person name="Christmann A."/>
            <person name="Boemecke M."/>
            <person name="Steckel S."/>
            <person name="Bhattacharyya A."/>
            <person name="Lykidis A."/>
            <person name="Overbeek R."/>
            <person name="Klenk H.-P."/>
            <person name="Gunsalus R.P."/>
            <person name="Fritz H.-J."/>
            <person name="Gottschalk G."/>
        </authorList>
    </citation>
    <scope>NUCLEOTIDE SEQUENCE [LARGE SCALE GENOMIC DNA]</scope>
    <source>
        <strain>ATCC BAA-159 / DSM 3647 / Goe1 / Go1 / JCM 11833 / OCM 88</strain>
    </source>
</reference>
<organism>
    <name type="scientific">Methanosarcina mazei (strain ATCC BAA-159 / DSM 3647 / Goe1 / Go1 / JCM 11833 / OCM 88)</name>
    <name type="common">Methanosarcina frisia</name>
    <dbReference type="NCBI Taxonomy" id="192952"/>
    <lineage>
        <taxon>Archaea</taxon>
        <taxon>Methanobacteriati</taxon>
        <taxon>Methanobacteriota</taxon>
        <taxon>Stenosarchaea group</taxon>
        <taxon>Methanomicrobia</taxon>
        <taxon>Methanosarcinales</taxon>
        <taxon>Methanosarcinaceae</taxon>
        <taxon>Methanosarcina</taxon>
    </lineage>
</organism>
<keyword id="KW-0143">Chaperone</keyword>
<keyword id="KW-0963">Cytoplasm</keyword>
<sequence>MTSELPPQIQNQIAQLQQVQQQVQALSMQKSQIEAMQKESKMALEELERLADDAVIYRSVGELVIKTTKEESVSKLKDREETLSLRLQSISRQEERLTARFKQLQEQIQQALGPRAQ</sequence>
<comment type="function">
    <text evidence="1">Molecular chaperone capable of stabilizing a range of proteins. Seems to fulfill an ATP-independent, HSP70-like function in archaeal de novo protein folding.</text>
</comment>
<comment type="subunit">
    <text evidence="1">Heterohexamer of two alpha and four beta subunits.</text>
</comment>
<comment type="subcellular location">
    <subcellularLocation>
        <location evidence="1">Cytoplasm</location>
    </subcellularLocation>
</comment>
<comment type="similarity">
    <text evidence="1">Belongs to the prefoldin subunit beta family.</text>
</comment>
<proteinExistence type="inferred from homology"/>
<evidence type="ECO:0000255" key="1">
    <source>
        <dbReference type="HAMAP-Rule" id="MF_00307"/>
    </source>
</evidence>
<name>PFDB_METMA</name>
<feature type="chain" id="PRO_0000124862" description="Prefoldin subunit beta">
    <location>
        <begin position="1"/>
        <end position="117"/>
    </location>
</feature>
<gene>
    <name evidence="1" type="primary">pfdB</name>
    <name type="ordered locus">MM_0674</name>
</gene>
<dbReference type="EMBL" id="AE008384">
    <property type="protein sequence ID" value="AAM30370.1"/>
    <property type="molecule type" value="Genomic_DNA"/>
</dbReference>
<dbReference type="RefSeq" id="WP_011032625.1">
    <property type="nucleotide sequence ID" value="NC_003901.1"/>
</dbReference>
<dbReference type="SMR" id="Q8PZ21"/>
<dbReference type="KEGG" id="mma:MM_0674"/>
<dbReference type="PATRIC" id="fig|192952.21.peg.802"/>
<dbReference type="eggNOG" id="arCOG01342">
    <property type="taxonomic scope" value="Archaea"/>
</dbReference>
<dbReference type="HOGENOM" id="CLU_131909_2_1_2"/>
<dbReference type="Proteomes" id="UP000000595">
    <property type="component" value="Chromosome"/>
</dbReference>
<dbReference type="GO" id="GO:0005737">
    <property type="term" value="C:cytoplasm"/>
    <property type="evidence" value="ECO:0007669"/>
    <property type="project" value="UniProtKB-SubCell"/>
</dbReference>
<dbReference type="GO" id="GO:0016272">
    <property type="term" value="C:prefoldin complex"/>
    <property type="evidence" value="ECO:0007669"/>
    <property type="project" value="UniProtKB-UniRule"/>
</dbReference>
<dbReference type="GO" id="GO:0051087">
    <property type="term" value="F:protein-folding chaperone binding"/>
    <property type="evidence" value="ECO:0007669"/>
    <property type="project" value="TreeGrafter"/>
</dbReference>
<dbReference type="GO" id="GO:0051082">
    <property type="term" value="F:unfolded protein binding"/>
    <property type="evidence" value="ECO:0007669"/>
    <property type="project" value="UniProtKB-UniRule"/>
</dbReference>
<dbReference type="GO" id="GO:0051131">
    <property type="term" value="P:chaperone-mediated protein complex assembly"/>
    <property type="evidence" value="ECO:0007669"/>
    <property type="project" value="TreeGrafter"/>
</dbReference>
<dbReference type="GO" id="GO:0006457">
    <property type="term" value="P:protein folding"/>
    <property type="evidence" value="ECO:0007669"/>
    <property type="project" value="UniProtKB-UniRule"/>
</dbReference>
<dbReference type="CDD" id="cd23162">
    <property type="entry name" value="Prefoldin_beta_GimC"/>
    <property type="match status" value="1"/>
</dbReference>
<dbReference type="Gene3D" id="1.10.287.370">
    <property type="match status" value="1"/>
</dbReference>
<dbReference type="HAMAP" id="MF_00307">
    <property type="entry name" value="PfdB"/>
    <property type="match status" value="1"/>
</dbReference>
<dbReference type="InterPro" id="IPR002777">
    <property type="entry name" value="PFD_beta-like"/>
</dbReference>
<dbReference type="InterPro" id="IPR012713">
    <property type="entry name" value="PfdB"/>
</dbReference>
<dbReference type="InterPro" id="IPR009053">
    <property type="entry name" value="Prefoldin"/>
</dbReference>
<dbReference type="NCBIfam" id="TIGR02338">
    <property type="entry name" value="gimC_beta"/>
    <property type="match status" value="1"/>
</dbReference>
<dbReference type="PANTHER" id="PTHR21431">
    <property type="entry name" value="PREFOLDIN SUBUNIT 6"/>
    <property type="match status" value="1"/>
</dbReference>
<dbReference type="PANTHER" id="PTHR21431:SF0">
    <property type="entry name" value="PREFOLDIN SUBUNIT 6"/>
    <property type="match status" value="1"/>
</dbReference>
<dbReference type="Pfam" id="PF01920">
    <property type="entry name" value="Prefoldin_2"/>
    <property type="match status" value="1"/>
</dbReference>
<dbReference type="SUPFAM" id="SSF46579">
    <property type="entry name" value="Prefoldin"/>
    <property type="match status" value="1"/>
</dbReference>